<reference evidence="8" key="1">
    <citation type="journal article" date="2019" name="Elife">
        <title>Combinations of Spok genes create multiple meiotic drivers in Podospora.</title>
        <authorList>
            <person name="Vogan A.A."/>
            <person name="Ament-Velasquez S.L."/>
            <person name="Granger-Farbos A."/>
            <person name="Svedberg J."/>
            <person name="Bastiaans E."/>
            <person name="Debets A.J."/>
            <person name="Coustou V."/>
            <person name="Yvanne H."/>
            <person name="Clave C."/>
            <person name="Saupe S.J."/>
            <person name="Johannesson H."/>
        </authorList>
    </citation>
    <scope>NUCLEOTIDE SEQUENCE [GENOMIC DNA]</scope>
    <scope>FUNCTION</scope>
    <source>
        <strain evidence="8">Wa87</strain>
    </source>
</reference>
<protein>
    <recommendedName>
        <fullName evidence="7">Meiotic driver SPOK4</fullName>
    </recommendedName>
    <alternativeName>
        <fullName evidence="6">Spore killer 4</fullName>
    </alternativeName>
</protein>
<gene>
    <name evidence="6" type="primary">SPOK4</name>
</gene>
<sequence length="758" mass="85956">MSDKDRITQLLRKLEEAKAREEEAKAREAQERCEKERLQLEHRKTTFLEYLRNCHRHLYNALRLTDTSRSSTGYTKVVGKYYPKRLRPWTNFTNVLHPRYFDLVQKICGQRQLFEPASTTKNLGTIISDHLAGNEKAIDRFEVDAVERPVQGILKVLATHEEAGKAYRCPEFRFSANLRELTQEDDRSSGADDNTSDGSLERRQQAGPNKRPTSKRKYICSNRQPDGVGIRMQPGGGQTQAFIYDYKAAHKVAIEHVRSATAKEHLFHEVVARINDDKLSRDEEVQRREQAEAFIAMALTQVFDYMITYGVSYGYVAAGRCLLLLYVDRDDWQTLYCHPCLPADDVGEPTNDWTDRLSHTAVAQLVSFCLSSFQSEALEGQSLETALSVAKATLKTWSESYADVAYLGLEPPELSSAASSQNTENSEYTSEAKPTGRKVALRSQSSCKPAAVLPQGNEHDEHDEDHSEPGASRSRLAANKRKRGPSSGGEDEDIAMADPEPTRQYCTQACLLGLKRGKDLDENCPNVSLHRFDGSSRHPVNAHRFTDMVKQQLLLSPYKGCRMVDFWDKRGAMGWLFKLELFPYGYTFVGKGTLEDRLSRLEHEGRVYARLDHLQGDVVPVHLGLVRLDRGYILPGLEFVVYMMLMSWAGQTPSASMADAETLKRESLTAIWSEGVDHGDDNRANYLWNAERCRIMIIDFDRAHLFPPLKARAVSRLSKPKRKRETPNSYLTEITGREARYVFKQMDRSPRATPSHGG</sequence>
<keyword id="KW-0175">Coiled coil</keyword>
<keyword id="KW-0963">Cytoplasm</keyword>
<keyword id="KW-0539">Nucleus</keyword>
<keyword id="KW-0800">Toxin</keyword>
<organism evidence="8">
    <name type="scientific">Podospora anserina</name>
    <name type="common">Pleurage anserina</name>
    <dbReference type="NCBI Taxonomy" id="2587412"/>
    <lineage>
        <taxon>Eukaryota</taxon>
        <taxon>Fungi</taxon>
        <taxon>Dikarya</taxon>
        <taxon>Ascomycota</taxon>
        <taxon>Pezizomycotina</taxon>
        <taxon>Sordariomycetes</taxon>
        <taxon>Sordariomycetidae</taxon>
        <taxon>Sordariales</taxon>
        <taxon>Podosporaceae</taxon>
        <taxon>Podospora</taxon>
    </lineage>
</organism>
<dbReference type="EMBL" id="MK521589">
    <property type="protein sequence ID" value="QDO72524.1"/>
    <property type="molecule type" value="Genomic_DNA"/>
</dbReference>
<dbReference type="VEuPathDB" id="FungiDB:PODANS_5_10"/>
<dbReference type="GO" id="GO:0005737">
    <property type="term" value="C:cytoplasm"/>
    <property type="evidence" value="ECO:0000250"/>
    <property type="project" value="UniProtKB"/>
</dbReference>
<dbReference type="GO" id="GO:0005634">
    <property type="term" value="C:nucleus"/>
    <property type="evidence" value="ECO:0000250"/>
    <property type="project" value="UniProtKB"/>
</dbReference>
<dbReference type="GO" id="GO:0004536">
    <property type="term" value="F:DNA nuclease activity"/>
    <property type="evidence" value="ECO:0000250"/>
    <property type="project" value="UniProtKB"/>
</dbReference>
<dbReference type="GO" id="GO:0016301">
    <property type="term" value="F:kinase activity"/>
    <property type="evidence" value="ECO:0000250"/>
    <property type="project" value="UniProtKB"/>
</dbReference>
<dbReference type="GO" id="GO:0090729">
    <property type="term" value="F:toxin activity"/>
    <property type="evidence" value="ECO:0007669"/>
    <property type="project" value="UniProtKB-KW"/>
</dbReference>
<dbReference type="GO" id="GO:0110134">
    <property type="term" value="P:meiotic drive"/>
    <property type="evidence" value="ECO:0000314"/>
    <property type="project" value="UniProtKB"/>
</dbReference>
<evidence type="ECO:0000250" key="1">
    <source>
        <dbReference type="UniProtKB" id="A0A447CCJ8"/>
    </source>
</evidence>
<evidence type="ECO:0000250" key="2">
    <source>
        <dbReference type="UniProtKB" id="B2AFA8"/>
    </source>
</evidence>
<evidence type="ECO:0000255" key="3"/>
<evidence type="ECO:0000256" key="4">
    <source>
        <dbReference type="SAM" id="MobiDB-lite"/>
    </source>
</evidence>
<evidence type="ECO:0000269" key="5">
    <source>
    </source>
</evidence>
<evidence type="ECO:0000303" key="6">
    <source>
    </source>
</evidence>
<evidence type="ECO:0000305" key="7"/>
<evidence type="ECO:0000312" key="8">
    <source>
        <dbReference type="EMBL" id="QDO72524.1"/>
    </source>
</evidence>
<name>SPOK4_PODAS</name>
<feature type="chain" id="PRO_0000453038" description="Meiotic driver SPOK4">
    <location>
        <begin position="1"/>
        <end position="758"/>
    </location>
</feature>
<feature type="region of interest" description="Disordered" evidence="4">
    <location>
        <begin position="180"/>
        <end position="230"/>
    </location>
</feature>
<feature type="region of interest" description="Disordered" evidence="4">
    <location>
        <begin position="414"/>
        <end position="499"/>
    </location>
</feature>
<feature type="coiled-coil region" evidence="3">
    <location>
        <begin position="4"/>
        <end position="41"/>
    </location>
</feature>
<feature type="compositionally biased region" description="Basic and acidic residues" evidence="4">
    <location>
        <begin position="181"/>
        <end position="190"/>
    </location>
</feature>
<feature type="compositionally biased region" description="Polar residues" evidence="4">
    <location>
        <begin position="416"/>
        <end position="429"/>
    </location>
</feature>
<feature type="compositionally biased region" description="Basic and acidic residues" evidence="4">
    <location>
        <begin position="457"/>
        <end position="468"/>
    </location>
</feature>
<comment type="function">
    <text evidence="1 5">Promotes unequal transmission of alleles from the parental zygote to progeny spores by acting as poison/antidote system, leading to poisoning of progeny that do not inherit the allele (PubMed:31347500). May possess DNA nuclease activity that leads to spore killing, and a kinase activity that confers resistance to the nuclease activity (By similarity). Can suppress meiotic drive by the P.comata SPOK1 protein (PubMed:31347500).</text>
</comment>
<comment type="subcellular location">
    <subcellularLocation>
        <location evidence="2">Cytoplasm</location>
    </subcellularLocation>
    <subcellularLocation>
        <location evidence="2">Nucleus</location>
    </subcellularLocation>
</comment>
<proteinExistence type="inferred from homology"/>
<accession>A0A516F183</accession>